<comment type="subunit">
    <text evidence="1">Interacts with FEM1B.</text>
</comment>
<comment type="subcellular location">
    <subcellularLocation>
        <location evidence="5">Endoplasmic reticulum membrane</location>
        <topology evidence="3">Multi-pass membrane protein</topology>
    </subcellularLocation>
    <subcellularLocation>
        <location evidence="5">Golgi apparatus</location>
        <location evidence="5">cis-Golgi network membrane</location>
        <topology evidence="3">Multi-pass membrane protein</topology>
    </subcellularLocation>
</comment>
<comment type="tissue specificity">
    <text evidence="5">Highly expressed in testis.</text>
</comment>
<comment type="developmental stage">
    <text evidence="5">The protein first appears in meiotic spermatocytes and becomes abundant in spermatids around stage III-IV (at protein level).</text>
</comment>
<comment type="caution">
    <text evidence="2 5">The PHTF domain was initially defined as an atypical homeodomain, suggesting that this protein could act as a transcription regulator (By similarity). However, the protein is not found in the nucleus and mainly localizes in the endoplasmic reticulum membrane, suggesting that it does not act as a transcription factor (PubMed:12604659).</text>
</comment>
<feature type="chain" id="PRO_0000451603" description="Protein PHTF1">
    <location>
        <begin position="1"/>
        <end position="762"/>
    </location>
</feature>
<feature type="transmembrane region" description="Helical" evidence="3">
    <location>
        <begin position="77"/>
        <end position="97"/>
    </location>
</feature>
<feature type="transmembrane region" description="Helical" evidence="3">
    <location>
        <begin position="99"/>
        <end position="119"/>
    </location>
</feature>
<feature type="transmembrane region" description="Helical" evidence="3">
    <location>
        <begin position="121"/>
        <end position="141"/>
    </location>
</feature>
<feature type="transmembrane region" description="Helical" evidence="3">
    <location>
        <begin position="473"/>
        <end position="493"/>
    </location>
</feature>
<feature type="transmembrane region" description="Helical" evidence="3">
    <location>
        <begin position="515"/>
        <end position="535"/>
    </location>
</feature>
<feature type="transmembrane region" description="Helical" evidence="3">
    <location>
        <begin position="611"/>
        <end position="631"/>
    </location>
</feature>
<feature type="transmembrane region" description="Helical" evidence="3">
    <location>
        <begin position="645"/>
        <end position="665"/>
    </location>
</feature>
<feature type="transmembrane region" description="Helical" evidence="3">
    <location>
        <begin position="737"/>
        <end position="757"/>
    </location>
</feature>
<feature type="domain" description="PHTF" evidence="3">
    <location>
        <begin position="6"/>
        <end position="150"/>
    </location>
</feature>
<feature type="region of interest" description="Disordered" evidence="4">
    <location>
        <begin position="152"/>
        <end position="184"/>
    </location>
</feature>
<feature type="region of interest" description="Disordered" evidence="4">
    <location>
        <begin position="345"/>
        <end position="415"/>
    </location>
</feature>
<feature type="compositionally biased region" description="Low complexity" evidence="4">
    <location>
        <begin position="348"/>
        <end position="364"/>
    </location>
</feature>
<feature type="compositionally biased region" description="Basic and acidic residues" evidence="4">
    <location>
        <begin position="365"/>
        <end position="376"/>
    </location>
</feature>
<feature type="modified residue" description="Phosphoserine" evidence="1">
    <location>
        <position position="272"/>
    </location>
</feature>
<feature type="modified residue" description="Phosphoserine" evidence="1">
    <location>
        <position position="276"/>
    </location>
</feature>
<feature type="modified residue" description="Phosphoserine" evidence="1">
    <location>
        <position position="277"/>
    </location>
</feature>
<feature type="modified residue" description="Phosphoserine" evidence="1">
    <location>
        <position position="334"/>
    </location>
</feature>
<feature type="modified residue" description="Phosphoserine" evidence="1">
    <location>
        <position position="336"/>
    </location>
</feature>
<feature type="glycosylation site" description="N-linked (GlcNAc...) asparagine" evidence="3">
    <location>
        <position position="179"/>
    </location>
</feature>
<feature type="glycosylation site" description="N-linked (GlcNAc...) asparagine" evidence="3">
    <location>
        <position position="224"/>
    </location>
</feature>
<feature type="glycosylation site" description="N-linked (GlcNAc...) asparagine" evidence="3">
    <location>
        <position position="363"/>
    </location>
</feature>
<feature type="glycosylation site" description="N-linked (GlcNAc...) asparagine" evidence="3">
    <location>
        <position position="431"/>
    </location>
</feature>
<feature type="glycosylation site" description="N-linked (GlcNAc...) asparagine" evidence="3">
    <location>
        <position position="674"/>
    </location>
</feature>
<feature type="glycosylation site" description="N-linked (GlcNAc...) asparagine" evidence="3">
    <location>
        <position position="733"/>
    </location>
</feature>
<gene>
    <name evidence="6 8" type="primary">Phtf1</name>
</gene>
<sequence length="762" mass="86835">MASNERDAISWYQKKIGAYDQQIWEKSIEQTQIKGFKNKPKKMGHIKPDLIDVDLIRGSTFAKAKPEIPWTSLTRKGLVRVVFFPLFSSWWIQVTSLRIFVWLLLLYLMQVTAIVLYLMMPIVSVSEVLGPLCLMLLMGTVHCQIVSTQITRPSGNNGNRRRRKLRKTVNGDGTRDNGNNSPDKIRAVETLDSAPSVGGFWGTLFGNRIKRVKLVSNKGTETDNDSGCFHPIIKKRQGRPEIRMWQAREKAKVSDGEKCRREAYRRLGNGVSDDLSSEEDGEARTQMILLRRSVEGASSDNGCEVKNRKSILSRHLNSQVKKTATRWCHIVRDSDSLAESEFESAAFSQGSRSGMSGGSRSLNLSRRDSESTRHDSETEDMLWDDLLHGPECRSSVTSDSEGAHVNTLHSGTKRDPKEDVFQQNHLFWLQNSSPASERVSAIIWEGNECKKMDMSVLEISGIIMSRVNAYEQGVGYQMLGNAVTIGLALFPFLYRLFREKSFDQLKSISAEEVLTLFCGAPPVTPVVILSIINFFERLCLTWIFFFMMCVAERTYKQRFLFAKLFSHITSARKARKYEIPHFRLKKVENIKIWLSLRSYLKRRGPQRSVDVVVSSVFLLTLSIAFICCAQVLQGHKTFLNDAYNWEFLIWETALLLFLLRLASLGSETNKKYSNVSILLTEQINLYLKMEKKPNKKEQLTLVNNVLKLSTKLLKELDTPFRLYGLTMNPLIYNITRVVILSAVSGVISDLLGFNIRLWKIKS</sequence>
<dbReference type="EMBL" id="AABR07012761">
    <property type="status" value="NOT_ANNOTATED_CDS"/>
    <property type="molecule type" value="Genomic_DNA"/>
</dbReference>
<dbReference type="RefSeq" id="NP_001178031.1">
    <property type="nucleotide sequence ID" value="NM_001191102.1"/>
</dbReference>
<dbReference type="RefSeq" id="XP_006233123.1">
    <property type="nucleotide sequence ID" value="XM_006233061.5"/>
</dbReference>
<dbReference type="SMR" id="F1M8G0"/>
<dbReference type="FunCoup" id="F1M8G0">
    <property type="interactions" value="2481"/>
</dbReference>
<dbReference type="STRING" id="10116.ENSRNOP00000026863"/>
<dbReference type="GlyCosmos" id="F1M8G0">
    <property type="glycosylation" value="6 sites, No reported glycans"/>
</dbReference>
<dbReference type="GlyGen" id="F1M8G0">
    <property type="glycosylation" value="7 sites"/>
</dbReference>
<dbReference type="iPTMnet" id="F1M8G0"/>
<dbReference type="PhosphoSitePlus" id="F1M8G0"/>
<dbReference type="PaxDb" id="10116-ENSRNOP00000026863"/>
<dbReference type="Ensembl" id="ENSRNOT00000026863.7">
    <property type="protein sequence ID" value="ENSRNOP00000026863.4"/>
    <property type="gene ID" value="ENSRNOG00000019785.8"/>
</dbReference>
<dbReference type="GeneID" id="252962"/>
<dbReference type="KEGG" id="rno:252962"/>
<dbReference type="AGR" id="RGD:620426"/>
<dbReference type="CTD" id="10745"/>
<dbReference type="RGD" id="620426">
    <property type="gene designation" value="Phtf1"/>
</dbReference>
<dbReference type="eggNOG" id="ENOG502QQGQ">
    <property type="taxonomic scope" value="Eukaryota"/>
</dbReference>
<dbReference type="GeneTree" id="ENSGT00390000011648"/>
<dbReference type="HOGENOM" id="CLU_013937_0_0_1"/>
<dbReference type="InParanoid" id="F1M8G0"/>
<dbReference type="OMA" id="KMWQTRE"/>
<dbReference type="OrthoDB" id="10066656at2759"/>
<dbReference type="TreeFam" id="TF323570"/>
<dbReference type="PRO" id="PR:F1M8G0"/>
<dbReference type="Proteomes" id="UP000002494">
    <property type="component" value="Chromosome 2"/>
</dbReference>
<dbReference type="Bgee" id="ENSRNOG00000019785">
    <property type="expression patterns" value="Expressed in testis and 20 other cell types or tissues"/>
</dbReference>
<dbReference type="GO" id="GO:0033106">
    <property type="term" value="C:cis-Golgi network membrane"/>
    <property type="evidence" value="ECO:0000314"/>
    <property type="project" value="FlyBase"/>
</dbReference>
<dbReference type="GO" id="GO:0005789">
    <property type="term" value="C:endoplasmic reticulum membrane"/>
    <property type="evidence" value="ECO:0000314"/>
    <property type="project" value="FlyBase"/>
</dbReference>
<dbReference type="GO" id="GO:0007283">
    <property type="term" value="P:spermatogenesis"/>
    <property type="evidence" value="ECO:0000303"/>
    <property type="project" value="RGD"/>
</dbReference>
<dbReference type="InterPro" id="IPR039775">
    <property type="entry name" value="PHTF1/2"/>
</dbReference>
<dbReference type="InterPro" id="IPR021980">
    <property type="entry name" value="PHTF1/2_N"/>
</dbReference>
<dbReference type="PANTHER" id="PTHR12680:SF8">
    <property type="entry name" value="PROTEIN PHTF1"/>
    <property type="match status" value="1"/>
</dbReference>
<dbReference type="PANTHER" id="PTHR12680">
    <property type="entry name" value="PUTATIVE HOMEODOMAIN TRANSCRIPTION FACTOR PHTF"/>
    <property type="match status" value="1"/>
</dbReference>
<dbReference type="Pfam" id="PF12129">
    <property type="entry name" value="PHTF1-2_N"/>
    <property type="match status" value="1"/>
</dbReference>
<keyword id="KW-0256">Endoplasmic reticulum</keyword>
<keyword id="KW-0325">Glycoprotein</keyword>
<keyword id="KW-0333">Golgi apparatus</keyword>
<keyword id="KW-0472">Membrane</keyword>
<keyword id="KW-0597">Phosphoprotein</keyword>
<keyword id="KW-1185">Reference proteome</keyword>
<keyword id="KW-0812">Transmembrane</keyword>
<keyword id="KW-1133">Transmembrane helix</keyword>
<name>PHTF1_RAT</name>
<evidence type="ECO:0000250" key="1">
    <source>
        <dbReference type="UniProtKB" id="Q9QZ09"/>
    </source>
</evidence>
<evidence type="ECO:0000250" key="2">
    <source>
        <dbReference type="UniProtKB" id="Q9UMS5"/>
    </source>
</evidence>
<evidence type="ECO:0000255" key="3"/>
<evidence type="ECO:0000256" key="4">
    <source>
        <dbReference type="SAM" id="MobiDB-lite"/>
    </source>
</evidence>
<evidence type="ECO:0000269" key="5">
    <source>
    </source>
</evidence>
<evidence type="ECO:0000303" key="6">
    <source>
    </source>
</evidence>
<evidence type="ECO:0000305" key="7"/>
<evidence type="ECO:0000312" key="8">
    <source>
        <dbReference type="RGD" id="620426"/>
    </source>
</evidence>
<reference key="1">
    <citation type="journal article" date="2004" name="Nature">
        <title>Genome sequence of the Brown Norway rat yields insights into mammalian evolution.</title>
        <authorList>
            <person name="Gibbs R.A."/>
            <person name="Weinstock G.M."/>
            <person name="Metzker M.L."/>
            <person name="Muzny D.M."/>
            <person name="Sodergren E.J."/>
            <person name="Scherer S."/>
            <person name="Scott G."/>
            <person name="Steffen D."/>
            <person name="Worley K.C."/>
            <person name="Burch P.E."/>
            <person name="Okwuonu G."/>
            <person name="Hines S."/>
            <person name="Lewis L."/>
            <person name="Deramo C."/>
            <person name="Delgado O."/>
            <person name="Dugan-Rocha S."/>
            <person name="Miner G."/>
            <person name="Morgan M."/>
            <person name="Hawes A."/>
            <person name="Gill R."/>
            <person name="Holt R.A."/>
            <person name="Adams M.D."/>
            <person name="Amanatides P.G."/>
            <person name="Baden-Tillson H."/>
            <person name="Barnstead M."/>
            <person name="Chin S."/>
            <person name="Evans C.A."/>
            <person name="Ferriera S."/>
            <person name="Fosler C."/>
            <person name="Glodek A."/>
            <person name="Gu Z."/>
            <person name="Jennings D."/>
            <person name="Kraft C.L."/>
            <person name="Nguyen T."/>
            <person name="Pfannkoch C.M."/>
            <person name="Sitter C."/>
            <person name="Sutton G.G."/>
            <person name="Venter J.C."/>
            <person name="Woodage T."/>
            <person name="Smith D."/>
            <person name="Lee H.-M."/>
            <person name="Gustafson E."/>
            <person name="Cahill P."/>
            <person name="Kana A."/>
            <person name="Doucette-Stamm L."/>
            <person name="Weinstock K."/>
            <person name="Fechtel K."/>
            <person name="Weiss R.B."/>
            <person name="Dunn D.M."/>
            <person name="Green E.D."/>
            <person name="Blakesley R.W."/>
            <person name="Bouffard G.G."/>
            <person name="De Jong P.J."/>
            <person name="Osoegawa K."/>
            <person name="Zhu B."/>
            <person name="Marra M."/>
            <person name="Schein J."/>
            <person name="Bosdet I."/>
            <person name="Fjell C."/>
            <person name="Jones S."/>
            <person name="Krzywinski M."/>
            <person name="Mathewson C."/>
            <person name="Siddiqui A."/>
            <person name="Wye N."/>
            <person name="McPherson J."/>
            <person name="Zhao S."/>
            <person name="Fraser C.M."/>
            <person name="Shetty J."/>
            <person name="Shatsman S."/>
            <person name="Geer K."/>
            <person name="Chen Y."/>
            <person name="Abramzon S."/>
            <person name="Nierman W.C."/>
            <person name="Havlak P.H."/>
            <person name="Chen R."/>
            <person name="Durbin K.J."/>
            <person name="Egan A."/>
            <person name="Ren Y."/>
            <person name="Song X.-Z."/>
            <person name="Li B."/>
            <person name="Liu Y."/>
            <person name="Qin X."/>
            <person name="Cawley S."/>
            <person name="Cooney A.J."/>
            <person name="D'Souza L.M."/>
            <person name="Martin K."/>
            <person name="Wu J.Q."/>
            <person name="Gonzalez-Garay M.L."/>
            <person name="Jackson A.R."/>
            <person name="Kalafus K.J."/>
            <person name="McLeod M.P."/>
            <person name="Milosavljevic A."/>
            <person name="Virk D."/>
            <person name="Volkov A."/>
            <person name="Wheeler D.A."/>
            <person name="Zhang Z."/>
            <person name="Bailey J.A."/>
            <person name="Eichler E.E."/>
            <person name="Tuzun E."/>
            <person name="Birney E."/>
            <person name="Mongin E."/>
            <person name="Ureta-Vidal A."/>
            <person name="Woodwark C."/>
            <person name="Zdobnov E."/>
            <person name="Bork P."/>
            <person name="Suyama M."/>
            <person name="Torrents D."/>
            <person name="Alexandersson M."/>
            <person name="Trask B.J."/>
            <person name="Young J.M."/>
            <person name="Huang H."/>
            <person name="Wang H."/>
            <person name="Xing H."/>
            <person name="Daniels S."/>
            <person name="Gietzen D."/>
            <person name="Schmidt J."/>
            <person name="Stevens K."/>
            <person name="Vitt U."/>
            <person name="Wingrove J."/>
            <person name="Camara F."/>
            <person name="Mar Alba M."/>
            <person name="Abril J.F."/>
            <person name="Guigo R."/>
            <person name="Smit A."/>
            <person name="Dubchak I."/>
            <person name="Rubin E.M."/>
            <person name="Couronne O."/>
            <person name="Poliakov A."/>
            <person name="Huebner N."/>
            <person name="Ganten D."/>
            <person name="Goesele C."/>
            <person name="Hummel O."/>
            <person name="Kreitler T."/>
            <person name="Lee Y.-A."/>
            <person name="Monti J."/>
            <person name="Schulz H."/>
            <person name="Zimdahl H."/>
            <person name="Himmelbauer H."/>
            <person name="Lehrach H."/>
            <person name="Jacob H.J."/>
            <person name="Bromberg S."/>
            <person name="Gullings-Handley J."/>
            <person name="Jensen-Seaman M.I."/>
            <person name="Kwitek A.E."/>
            <person name="Lazar J."/>
            <person name="Pasko D."/>
            <person name="Tonellato P.J."/>
            <person name="Twigger S."/>
            <person name="Ponting C.P."/>
            <person name="Duarte J.M."/>
            <person name="Rice S."/>
            <person name="Goodstadt L."/>
            <person name="Beatson S.A."/>
            <person name="Emes R.D."/>
            <person name="Winter E.E."/>
            <person name="Webber C."/>
            <person name="Brandt P."/>
            <person name="Nyakatura G."/>
            <person name="Adetobi M."/>
            <person name="Chiaromonte F."/>
            <person name="Elnitski L."/>
            <person name="Eswara P."/>
            <person name="Hardison R.C."/>
            <person name="Hou M."/>
            <person name="Kolbe D."/>
            <person name="Makova K."/>
            <person name="Miller W."/>
            <person name="Nekrutenko A."/>
            <person name="Riemer C."/>
            <person name="Schwartz S."/>
            <person name="Taylor J."/>
            <person name="Yang S."/>
            <person name="Zhang Y."/>
            <person name="Lindpaintner K."/>
            <person name="Andrews T.D."/>
            <person name="Caccamo M."/>
            <person name="Clamp M."/>
            <person name="Clarke L."/>
            <person name="Curwen V."/>
            <person name="Durbin R.M."/>
            <person name="Eyras E."/>
            <person name="Searle S.M."/>
            <person name="Cooper G.M."/>
            <person name="Batzoglou S."/>
            <person name="Brudno M."/>
            <person name="Sidow A."/>
            <person name="Stone E.A."/>
            <person name="Payseur B.A."/>
            <person name="Bourque G."/>
            <person name="Lopez-Otin C."/>
            <person name="Puente X.S."/>
            <person name="Chakrabarti K."/>
            <person name="Chatterji S."/>
            <person name="Dewey C."/>
            <person name="Pachter L."/>
            <person name="Bray N."/>
            <person name="Yap V.B."/>
            <person name="Caspi A."/>
            <person name="Tesler G."/>
            <person name="Pevzner P.A."/>
            <person name="Haussler D."/>
            <person name="Roskin K.M."/>
            <person name="Baertsch R."/>
            <person name="Clawson H."/>
            <person name="Furey T.S."/>
            <person name="Hinrichs A.S."/>
            <person name="Karolchik D."/>
            <person name="Kent W.J."/>
            <person name="Rosenbloom K.R."/>
            <person name="Trumbower H."/>
            <person name="Weirauch M."/>
            <person name="Cooper D.N."/>
            <person name="Stenson P.D."/>
            <person name="Ma B."/>
            <person name="Brent M."/>
            <person name="Arumugam M."/>
            <person name="Shteynberg D."/>
            <person name="Copley R.R."/>
            <person name="Taylor M.S."/>
            <person name="Riethman H."/>
            <person name="Mudunuri U."/>
            <person name="Peterson J."/>
            <person name="Guyer M."/>
            <person name="Felsenfeld A."/>
            <person name="Old S."/>
            <person name="Mockrin S."/>
            <person name="Collins F.S."/>
        </authorList>
    </citation>
    <scope>NUCLEOTIDE SEQUENCE [LARGE SCALE GENOMIC DNA]</scope>
    <source>
        <strain>Brown Norway</strain>
    </source>
</reference>
<reference key="2">
    <citation type="journal article" date="2003" name="Biol. Reprod.">
        <title>Phtf1 is an integral membrane protein localized in an endoplasmic reticulum domain in maturing male germ cells.</title>
        <authorList>
            <person name="Oyhenart J."/>
            <person name="Le Goffic R."/>
            <person name="Samson M."/>
            <person name="Jegou B."/>
            <person name="Raich N."/>
        </authorList>
    </citation>
    <scope>SUBCELLULAR LOCATION</scope>
    <scope>TISSUE SPECIFICITY</scope>
    <scope>DEVELOPMENTAL STAGE</scope>
</reference>
<proteinExistence type="evidence at protein level"/>
<organism>
    <name type="scientific">Rattus norvegicus</name>
    <name type="common">Rat</name>
    <dbReference type="NCBI Taxonomy" id="10116"/>
    <lineage>
        <taxon>Eukaryota</taxon>
        <taxon>Metazoa</taxon>
        <taxon>Chordata</taxon>
        <taxon>Craniata</taxon>
        <taxon>Vertebrata</taxon>
        <taxon>Euteleostomi</taxon>
        <taxon>Mammalia</taxon>
        <taxon>Eutheria</taxon>
        <taxon>Euarchontoglires</taxon>
        <taxon>Glires</taxon>
        <taxon>Rodentia</taxon>
        <taxon>Myomorpha</taxon>
        <taxon>Muroidea</taxon>
        <taxon>Muridae</taxon>
        <taxon>Murinae</taxon>
        <taxon>Rattus</taxon>
    </lineage>
</organism>
<accession>F1M8G0</accession>
<protein>
    <recommendedName>
        <fullName evidence="7">Protein PHTF1</fullName>
    </recommendedName>
</protein>